<reference key="1">
    <citation type="journal article" date="2005" name="Nature">
        <title>The genome of the social amoeba Dictyostelium discoideum.</title>
        <authorList>
            <person name="Eichinger L."/>
            <person name="Pachebat J.A."/>
            <person name="Gloeckner G."/>
            <person name="Rajandream M.A."/>
            <person name="Sucgang R."/>
            <person name="Berriman M."/>
            <person name="Song J."/>
            <person name="Olsen R."/>
            <person name="Szafranski K."/>
            <person name="Xu Q."/>
            <person name="Tunggal B."/>
            <person name="Kummerfeld S."/>
            <person name="Madera M."/>
            <person name="Konfortov B.A."/>
            <person name="Rivero F."/>
            <person name="Bankier A.T."/>
            <person name="Lehmann R."/>
            <person name="Hamlin N."/>
            <person name="Davies R."/>
            <person name="Gaudet P."/>
            <person name="Fey P."/>
            <person name="Pilcher K."/>
            <person name="Chen G."/>
            <person name="Saunders D."/>
            <person name="Sodergren E.J."/>
            <person name="Davis P."/>
            <person name="Kerhornou A."/>
            <person name="Nie X."/>
            <person name="Hall N."/>
            <person name="Anjard C."/>
            <person name="Hemphill L."/>
            <person name="Bason N."/>
            <person name="Farbrother P."/>
            <person name="Desany B."/>
            <person name="Just E."/>
            <person name="Morio T."/>
            <person name="Rost R."/>
            <person name="Churcher C.M."/>
            <person name="Cooper J."/>
            <person name="Haydock S."/>
            <person name="van Driessche N."/>
            <person name="Cronin A."/>
            <person name="Goodhead I."/>
            <person name="Muzny D.M."/>
            <person name="Mourier T."/>
            <person name="Pain A."/>
            <person name="Lu M."/>
            <person name="Harper D."/>
            <person name="Lindsay R."/>
            <person name="Hauser H."/>
            <person name="James K.D."/>
            <person name="Quiles M."/>
            <person name="Madan Babu M."/>
            <person name="Saito T."/>
            <person name="Buchrieser C."/>
            <person name="Wardroper A."/>
            <person name="Felder M."/>
            <person name="Thangavelu M."/>
            <person name="Johnson D."/>
            <person name="Knights A."/>
            <person name="Loulseged H."/>
            <person name="Mungall K.L."/>
            <person name="Oliver K."/>
            <person name="Price C."/>
            <person name="Quail M.A."/>
            <person name="Urushihara H."/>
            <person name="Hernandez J."/>
            <person name="Rabbinowitsch E."/>
            <person name="Steffen D."/>
            <person name="Sanders M."/>
            <person name="Ma J."/>
            <person name="Kohara Y."/>
            <person name="Sharp S."/>
            <person name="Simmonds M.N."/>
            <person name="Spiegler S."/>
            <person name="Tivey A."/>
            <person name="Sugano S."/>
            <person name="White B."/>
            <person name="Walker D."/>
            <person name="Woodward J.R."/>
            <person name="Winckler T."/>
            <person name="Tanaka Y."/>
            <person name="Shaulsky G."/>
            <person name="Schleicher M."/>
            <person name="Weinstock G.M."/>
            <person name="Rosenthal A."/>
            <person name="Cox E.C."/>
            <person name="Chisholm R.L."/>
            <person name="Gibbs R.A."/>
            <person name="Loomis W.F."/>
            <person name="Platzer M."/>
            <person name="Kay R.R."/>
            <person name="Williams J.G."/>
            <person name="Dear P.H."/>
            <person name="Noegel A.A."/>
            <person name="Barrell B.G."/>
            <person name="Kuspa A."/>
        </authorList>
    </citation>
    <scope>NUCLEOTIDE SEQUENCE [LARGE SCALE GENOMIC DNA]</scope>
    <source>
        <strain>AX4</strain>
    </source>
</reference>
<sequence length="528" mass="61401">MTSKKQKSSIDTITPTPPNTTTTTTTTSTTATTKDKKKSKKPKSSGLTKVGADIIELQASLLNRPARKQATHVNSRYEDHDTDTTEYNIWYHKKLGNRNWKDRDVSETRCNVLKDCGKTRANKDANFCCYFARGKCINGADCTSLHRIPTPEDDKRLRLTHDIFGRERHKTDRDDMNGVGSFSRDNRTLYIGGIKTNVSGSLEDMVRKNFEEWGRIEYVRVITNRSISFVRYLTRSSAEFAKEAMTDQTLDNGELLNIRWATEDSNPYAKKVDERNLHRVATEVINKRIREMTPDDQSALKYQMTGQYPNTDQQYDQNGQPINASPSTPYQLQYRGSTKYEAHPYARQYNNDLQKRVQSGETVDVAPLNGVGNYYSHSVGTMNQELQKQQYDNYMQQYYQAYGYDYSKLSDDQKLQLQQYFQSYYYGNQQEQQQQETQQIQNNNENNNDNEEEDDDDEDDDDDNEDDDNDNEETKDNKNDKVENKEEENKEVQEKINTESKEDTKNEEQEKKEEKEKTDSDNIVNKED</sequence>
<gene>
    <name type="primary">cwc2</name>
    <name type="ORF">DDB_G0284563</name>
</gene>
<accession>Q54PH5</accession>
<organism>
    <name type="scientific">Dictyostelium discoideum</name>
    <name type="common">Social amoeba</name>
    <dbReference type="NCBI Taxonomy" id="44689"/>
    <lineage>
        <taxon>Eukaryota</taxon>
        <taxon>Amoebozoa</taxon>
        <taxon>Evosea</taxon>
        <taxon>Eumycetozoa</taxon>
        <taxon>Dictyostelia</taxon>
        <taxon>Dictyosteliales</taxon>
        <taxon>Dictyosteliaceae</taxon>
        <taxon>Dictyostelium</taxon>
    </lineage>
</organism>
<evidence type="ECO:0000250" key="1"/>
<evidence type="ECO:0000255" key="2">
    <source>
        <dbReference type="PROSITE-ProRule" id="PRU00176"/>
    </source>
</evidence>
<evidence type="ECO:0000255" key="3">
    <source>
        <dbReference type="PROSITE-ProRule" id="PRU00723"/>
    </source>
</evidence>
<evidence type="ECO:0000256" key="4">
    <source>
        <dbReference type="SAM" id="MobiDB-lite"/>
    </source>
</evidence>
<evidence type="ECO:0000305" key="5"/>
<feature type="chain" id="PRO_0000356958" description="Pre-mRNA-splicing factor cwc2">
    <location>
        <begin position="1"/>
        <end position="528"/>
    </location>
</feature>
<feature type="domain" description="RRM" evidence="2">
    <location>
        <begin position="187"/>
        <end position="263"/>
    </location>
</feature>
<feature type="zinc finger region" description="C3H1-type" evidence="3">
    <location>
        <begin position="122"/>
        <end position="149"/>
    </location>
</feature>
<feature type="region of interest" description="Disordered" evidence="4">
    <location>
        <begin position="1"/>
        <end position="47"/>
    </location>
</feature>
<feature type="region of interest" description="Disordered" evidence="4">
    <location>
        <begin position="429"/>
        <end position="528"/>
    </location>
</feature>
<feature type="compositionally biased region" description="Low complexity" evidence="4">
    <location>
        <begin position="9"/>
        <end position="32"/>
    </location>
</feature>
<feature type="compositionally biased region" description="Low complexity" evidence="4">
    <location>
        <begin position="429"/>
        <end position="447"/>
    </location>
</feature>
<feature type="compositionally biased region" description="Acidic residues" evidence="4">
    <location>
        <begin position="448"/>
        <end position="471"/>
    </location>
</feature>
<feature type="compositionally biased region" description="Basic and acidic residues" evidence="4">
    <location>
        <begin position="472"/>
        <end position="528"/>
    </location>
</feature>
<name>CWC2_DICDI</name>
<keyword id="KW-0479">Metal-binding</keyword>
<keyword id="KW-0507">mRNA processing</keyword>
<keyword id="KW-0508">mRNA splicing</keyword>
<keyword id="KW-0539">Nucleus</keyword>
<keyword id="KW-1185">Reference proteome</keyword>
<keyword id="KW-0694">RNA-binding</keyword>
<keyword id="KW-0747">Spliceosome</keyword>
<keyword id="KW-0862">Zinc</keyword>
<keyword id="KW-0863">Zinc-finger</keyword>
<comment type="function">
    <text evidence="1">Involved in pre-mRNA splicing. Binds RNA (By similarity).</text>
</comment>
<comment type="subunit">
    <text evidence="1">Associated with the spliceosome.</text>
</comment>
<comment type="subcellular location">
    <subcellularLocation>
        <location evidence="1">Nucleus</location>
    </subcellularLocation>
</comment>
<comment type="domain">
    <text evidence="1">The C-terminal RRM domain and the zinc finger motif are necessary for RNA-binding.</text>
</comment>
<comment type="similarity">
    <text evidence="5">Belongs to the RRM CWC2 family.</text>
</comment>
<dbReference type="EMBL" id="AAFI02000066">
    <property type="protein sequence ID" value="EAL65208.1"/>
    <property type="molecule type" value="Genomic_DNA"/>
</dbReference>
<dbReference type="RefSeq" id="XP_638557.1">
    <property type="nucleotide sequence ID" value="XM_633465.1"/>
</dbReference>
<dbReference type="SMR" id="Q54PH5"/>
<dbReference type="STRING" id="44689.Q54PH5"/>
<dbReference type="GlyGen" id="Q54PH5">
    <property type="glycosylation" value="1 site"/>
</dbReference>
<dbReference type="PaxDb" id="44689-DDB0267176"/>
<dbReference type="EnsemblProtists" id="EAL65208">
    <property type="protein sequence ID" value="EAL65208"/>
    <property type="gene ID" value="DDB_G0284563"/>
</dbReference>
<dbReference type="GeneID" id="8624650"/>
<dbReference type="KEGG" id="ddi:DDB_G0284563"/>
<dbReference type="dictyBase" id="DDB_G0284563">
    <property type="gene designation" value="cwc2"/>
</dbReference>
<dbReference type="VEuPathDB" id="AmoebaDB:DDB_G0284563"/>
<dbReference type="eggNOG" id="KOG0118">
    <property type="taxonomic scope" value="Eukaryota"/>
</dbReference>
<dbReference type="HOGENOM" id="CLU_516251_0_0_1"/>
<dbReference type="InParanoid" id="Q54PH5"/>
<dbReference type="OMA" id="NSRYEDH"/>
<dbReference type="PRO" id="PR:Q54PH5"/>
<dbReference type="Proteomes" id="UP000002195">
    <property type="component" value="Chromosome 4"/>
</dbReference>
<dbReference type="GO" id="GO:0005634">
    <property type="term" value="C:nucleus"/>
    <property type="evidence" value="ECO:0000250"/>
    <property type="project" value="dictyBase"/>
</dbReference>
<dbReference type="GO" id="GO:0000974">
    <property type="term" value="C:Prp19 complex"/>
    <property type="evidence" value="ECO:0000250"/>
    <property type="project" value="UniProtKB"/>
</dbReference>
<dbReference type="GO" id="GO:0005681">
    <property type="term" value="C:spliceosomal complex"/>
    <property type="evidence" value="ECO:0000250"/>
    <property type="project" value="dictyBase"/>
</dbReference>
<dbReference type="GO" id="GO:0071006">
    <property type="term" value="C:U2-type catalytic step 1 spliceosome"/>
    <property type="evidence" value="ECO:0000318"/>
    <property type="project" value="GO_Central"/>
</dbReference>
<dbReference type="GO" id="GO:0071007">
    <property type="term" value="C:U2-type catalytic step 2 spliceosome"/>
    <property type="evidence" value="ECO:0000318"/>
    <property type="project" value="GO_Central"/>
</dbReference>
<dbReference type="GO" id="GO:0036002">
    <property type="term" value="F:pre-mRNA binding"/>
    <property type="evidence" value="ECO:0000250"/>
    <property type="project" value="UniProtKB"/>
</dbReference>
<dbReference type="GO" id="GO:0017070">
    <property type="term" value="F:U6 snRNA binding"/>
    <property type="evidence" value="ECO:0000250"/>
    <property type="project" value="UniProtKB"/>
</dbReference>
<dbReference type="GO" id="GO:0008270">
    <property type="term" value="F:zinc ion binding"/>
    <property type="evidence" value="ECO:0007669"/>
    <property type="project" value="UniProtKB-KW"/>
</dbReference>
<dbReference type="GO" id="GO:0045292">
    <property type="term" value="P:mRNA cis splicing, via spliceosome"/>
    <property type="evidence" value="ECO:0000250"/>
    <property type="project" value="UniProtKB"/>
</dbReference>
<dbReference type="GO" id="GO:0045787">
    <property type="term" value="P:positive regulation of cell cycle"/>
    <property type="evidence" value="ECO:0000250"/>
    <property type="project" value="UniProtKB"/>
</dbReference>
<dbReference type="GO" id="GO:0033120">
    <property type="term" value="P:positive regulation of RNA splicing"/>
    <property type="evidence" value="ECO:0000250"/>
    <property type="project" value="UniProtKB"/>
</dbReference>
<dbReference type="GO" id="GO:0000387">
    <property type="term" value="P:spliceosomal snRNP assembly"/>
    <property type="evidence" value="ECO:0000250"/>
    <property type="project" value="UniProtKB"/>
</dbReference>
<dbReference type="CDD" id="cd12360">
    <property type="entry name" value="RRM_cwf2"/>
    <property type="match status" value="1"/>
</dbReference>
<dbReference type="FunFam" id="3.30.70.330:FF:000502">
    <property type="entry name" value="Pre-mRNA-splicing factor cwc2, putative"/>
    <property type="match status" value="1"/>
</dbReference>
<dbReference type="Gene3D" id="3.30.70.330">
    <property type="match status" value="1"/>
</dbReference>
<dbReference type="InterPro" id="IPR039171">
    <property type="entry name" value="Cwc2/Slt11"/>
</dbReference>
<dbReference type="InterPro" id="IPR034181">
    <property type="entry name" value="Cwc2_RRM"/>
</dbReference>
<dbReference type="InterPro" id="IPR012677">
    <property type="entry name" value="Nucleotide-bd_a/b_plait_sf"/>
</dbReference>
<dbReference type="InterPro" id="IPR035979">
    <property type="entry name" value="RBD_domain_sf"/>
</dbReference>
<dbReference type="InterPro" id="IPR000504">
    <property type="entry name" value="RRM_dom"/>
</dbReference>
<dbReference type="InterPro" id="IPR032297">
    <property type="entry name" value="Torus"/>
</dbReference>
<dbReference type="InterPro" id="IPR000571">
    <property type="entry name" value="Znf_CCCH"/>
</dbReference>
<dbReference type="PANTHER" id="PTHR14089:SF2">
    <property type="entry name" value="PRE-MRNA-SPLICING FACTOR CWC2"/>
    <property type="match status" value="1"/>
</dbReference>
<dbReference type="PANTHER" id="PTHR14089">
    <property type="entry name" value="PRE-MRNA-SPLICING FACTOR RBM22"/>
    <property type="match status" value="1"/>
</dbReference>
<dbReference type="Pfam" id="PF00076">
    <property type="entry name" value="RRM_1"/>
    <property type="match status" value="1"/>
</dbReference>
<dbReference type="Pfam" id="PF16131">
    <property type="entry name" value="Torus"/>
    <property type="match status" value="1"/>
</dbReference>
<dbReference type="SMART" id="SM00360">
    <property type="entry name" value="RRM"/>
    <property type="match status" value="1"/>
</dbReference>
<dbReference type="SUPFAM" id="SSF54928">
    <property type="entry name" value="RNA-binding domain, RBD"/>
    <property type="match status" value="1"/>
</dbReference>
<dbReference type="PROSITE" id="PS50102">
    <property type="entry name" value="RRM"/>
    <property type="match status" value="1"/>
</dbReference>
<dbReference type="PROSITE" id="PS50103">
    <property type="entry name" value="ZF_C3H1"/>
    <property type="match status" value="1"/>
</dbReference>
<proteinExistence type="inferred from homology"/>
<protein>
    <recommendedName>
        <fullName>Pre-mRNA-splicing factor cwc2</fullName>
    </recommendedName>
</protein>